<organism>
    <name type="scientific">Caenorhabditis briggsae</name>
    <dbReference type="NCBI Taxonomy" id="6238"/>
    <lineage>
        <taxon>Eukaryota</taxon>
        <taxon>Metazoa</taxon>
        <taxon>Ecdysozoa</taxon>
        <taxon>Nematoda</taxon>
        <taxon>Chromadorea</taxon>
        <taxon>Rhabditida</taxon>
        <taxon>Rhabditina</taxon>
        <taxon>Rhabditomorpha</taxon>
        <taxon>Rhabditoidea</taxon>
        <taxon>Rhabditidae</taxon>
        <taxon>Peloderinae</taxon>
        <taxon>Caenorhabditis</taxon>
    </lineage>
</organism>
<sequence length="335" mass="38392">MAIVSSENRTCADEKLLALYQSWSYIASIVFNCLVPTISTYFLGRAIFQLCNQATIQYSTRILLIATILFAACHQVSYFAFKIDLLHTMFFKLDQPCFLQRSSYDCRFISIAQTTGVVGMALTGLAMSTDRALALTFPADYHKLKSVPRVVLSVFVFIVSFSTWFLLTMNDPLTGYLNHCGFYPSYSVANFQLMLDVILYLAIFNLIWDVILFYYARQQILWRRSYQFQKRYEARISLNCTQAVFVISICQCISNGANSGLMRLLMMIGTSITSVTYSSLLSLFYTAPYSCILLPILMMRISEYIREQRTIGILSLRSEKPGLEEHHQRMRAAWS</sequence>
<feature type="chain" id="PRO_0000273261" description="Serpentine receptor class alpha-13">
    <location>
        <begin position="1"/>
        <end position="335"/>
    </location>
</feature>
<feature type="topological domain" description="Extracellular" evidence="2 4">
    <location>
        <begin position="1"/>
        <end position="22"/>
    </location>
</feature>
<feature type="transmembrane region" description="Helical; Name=1" evidence="2">
    <location>
        <begin position="23"/>
        <end position="43"/>
    </location>
</feature>
<feature type="topological domain" description="Cytoplasmic" evidence="2 4">
    <location>
        <begin position="44"/>
        <end position="61"/>
    </location>
</feature>
<feature type="transmembrane region" description="Helical; Name=2" evidence="2">
    <location>
        <begin position="62"/>
        <end position="82"/>
    </location>
</feature>
<feature type="topological domain" description="Extracellular" evidence="2 4">
    <location>
        <begin position="83"/>
        <end position="107"/>
    </location>
</feature>
<feature type="transmembrane region" description="Helical; Name=3" evidence="2">
    <location>
        <begin position="108"/>
        <end position="128"/>
    </location>
</feature>
<feature type="topological domain" description="Cytoplasmic" evidence="2 4">
    <location>
        <begin position="129"/>
        <end position="149"/>
    </location>
</feature>
<feature type="transmembrane region" description="Helical; Name=4" evidence="2">
    <location>
        <begin position="150"/>
        <end position="170"/>
    </location>
</feature>
<feature type="topological domain" description="Extracellular" evidence="2 4">
    <location>
        <begin position="171"/>
        <end position="192"/>
    </location>
</feature>
<feature type="transmembrane region" description="Helical; Name=5" evidence="2">
    <location>
        <begin position="193"/>
        <end position="213"/>
    </location>
</feature>
<feature type="topological domain" description="Cytoplasmic" evidence="2 4">
    <location>
        <begin position="214"/>
        <end position="235"/>
    </location>
</feature>
<feature type="transmembrane region" description="Helical; Name=6" evidence="2">
    <location>
        <begin position="236"/>
        <end position="255"/>
    </location>
</feature>
<feature type="topological domain" description="Extracellular" evidence="2 4">
    <location>
        <begin position="256"/>
        <end position="278"/>
    </location>
</feature>
<feature type="transmembrane region" description="Helical; Name=7" evidence="2">
    <location>
        <begin position="279"/>
        <end position="299"/>
    </location>
</feature>
<feature type="topological domain" description="Cytoplasmic" evidence="2 4">
    <location>
        <begin position="300"/>
        <end position="335"/>
    </location>
</feature>
<gene>
    <name evidence="1" type="primary">sra-13</name>
    <name type="ORF">CBG00681</name>
</gene>
<dbReference type="EMBL" id="HE600999">
    <property type="protein sequence ID" value="CAP21963.2"/>
    <property type="molecule type" value="Genomic_DNA"/>
</dbReference>
<dbReference type="SMR" id="Q627G6"/>
<dbReference type="FunCoup" id="Q627G6">
    <property type="interactions" value="4"/>
</dbReference>
<dbReference type="STRING" id="6238.Q627G6"/>
<dbReference type="EnsemblMetazoa" id="CBG00681.1">
    <property type="protein sequence ID" value="CBG00681.1"/>
    <property type="gene ID" value="WBGene00024038"/>
</dbReference>
<dbReference type="WormBase" id="CBG00681">
    <property type="protein sequence ID" value="CBP26562"/>
    <property type="gene ID" value="WBGene00024038"/>
    <property type="gene designation" value="Cbr-sra-13"/>
</dbReference>
<dbReference type="eggNOG" id="ENOG502TH2W">
    <property type="taxonomic scope" value="Eukaryota"/>
</dbReference>
<dbReference type="HOGENOM" id="CLU_048025_0_1_1"/>
<dbReference type="InParanoid" id="Q627G6"/>
<dbReference type="OMA" id="NHCGFYP"/>
<dbReference type="Proteomes" id="UP000008549">
    <property type="component" value="Unassembled WGS sequence"/>
</dbReference>
<dbReference type="GO" id="GO:0016020">
    <property type="term" value="C:membrane"/>
    <property type="evidence" value="ECO:0007669"/>
    <property type="project" value="UniProtKB-SubCell"/>
</dbReference>
<dbReference type="GO" id="GO:0004930">
    <property type="term" value="F:G protein-coupled receptor activity"/>
    <property type="evidence" value="ECO:0007669"/>
    <property type="project" value="InterPro"/>
</dbReference>
<dbReference type="GO" id="GO:0004984">
    <property type="term" value="F:olfactory receptor activity"/>
    <property type="evidence" value="ECO:0000318"/>
    <property type="project" value="GO_Central"/>
</dbReference>
<dbReference type="GO" id="GO:0050907">
    <property type="term" value="P:detection of chemical stimulus involved in sensory perception"/>
    <property type="evidence" value="ECO:0000318"/>
    <property type="project" value="GO_Central"/>
</dbReference>
<dbReference type="Gene3D" id="1.20.1070.10">
    <property type="entry name" value="Rhodopsin 7-helix transmembrane proteins"/>
    <property type="match status" value="1"/>
</dbReference>
<dbReference type="InterPro" id="IPR000344">
    <property type="entry name" value="7TM_GPCR_serpentine_rcpt_Sra"/>
</dbReference>
<dbReference type="InterPro" id="IPR051080">
    <property type="entry name" value="Nematode_rcpt-like_serp_alpha"/>
</dbReference>
<dbReference type="PANTHER" id="PTHR31357">
    <property type="entry name" value="SERPENTINE RECEPTOR CLASS ALPHA-10"/>
    <property type="match status" value="1"/>
</dbReference>
<dbReference type="PANTHER" id="PTHR31357:SF15">
    <property type="entry name" value="SERPENTINE RECEPTOR CLASS ALPHA-13"/>
    <property type="match status" value="1"/>
</dbReference>
<dbReference type="Pfam" id="PF02117">
    <property type="entry name" value="7TM_GPCR_Sra"/>
    <property type="match status" value="1"/>
</dbReference>
<dbReference type="PRINTS" id="PR00697">
    <property type="entry name" value="TMPROTEINSRA"/>
</dbReference>
<dbReference type="SUPFAM" id="SSF81321">
    <property type="entry name" value="Family A G protein-coupled receptor-like"/>
    <property type="match status" value="1"/>
</dbReference>
<name>SRA13_CAEBR</name>
<proteinExistence type="inferred from homology"/>
<protein>
    <recommendedName>
        <fullName>Serpentine receptor class alpha-13</fullName>
        <shortName>Protein sra-13</shortName>
    </recommendedName>
</protein>
<evidence type="ECO:0000250" key="1">
    <source>
        <dbReference type="UniProtKB" id="Q20618"/>
    </source>
</evidence>
<evidence type="ECO:0000255" key="2"/>
<evidence type="ECO:0000269" key="3">
    <source>
    </source>
</evidence>
<evidence type="ECO:0000305" key="4"/>
<keyword id="KW-0472">Membrane</keyword>
<keyword id="KW-0552">Olfaction</keyword>
<keyword id="KW-0675">Receptor</keyword>
<keyword id="KW-1185">Reference proteome</keyword>
<keyword id="KW-0716">Sensory transduction</keyword>
<keyword id="KW-0812">Transmembrane</keyword>
<keyword id="KW-1133">Transmembrane helix</keyword>
<comment type="function">
    <text evidence="1">Chemosensory receptor that negatively regulates RAS/MAPK signaling during vulva induction and the negative regulation of olfaction of volitile attractants. Required for the suppression of vulval induction in response to food starvation. Signaling acts through the GPA-5 G-alpha protein subunit (By similarity).</text>
</comment>
<comment type="subcellular location">
    <subcellularLocation>
        <location evidence="2">Membrane</location>
        <topology evidence="2">Multi-pass membrane protein</topology>
    </subcellularLocation>
</comment>
<comment type="similarity">
    <text evidence="4">Belongs to the nematode receptor-like protein sra family.</text>
</comment>
<reference key="1">
    <citation type="journal article" date="2003" name="PLoS Biol.">
        <title>The genome sequence of Caenorhabditis briggsae: a platform for comparative genomics.</title>
        <authorList>
            <person name="Stein L.D."/>
            <person name="Bao Z."/>
            <person name="Blasiar D."/>
            <person name="Blumenthal T."/>
            <person name="Brent M.R."/>
            <person name="Chen N."/>
            <person name="Chinwalla A."/>
            <person name="Clarke L."/>
            <person name="Clee C."/>
            <person name="Coghlan A."/>
            <person name="Coulson A."/>
            <person name="D'Eustachio P."/>
            <person name="Fitch D.H.A."/>
            <person name="Fulton L.A."/>
            <person name="Fulton R.E."/>
            <person name="Griffiths-Jones S."/>
            <person name="Harris T.W."/>
            <person name="Hillier L.W."/>
            <person name="Kamath R."/>
            <person name="Kuwabara P.E."/>
            <person name="Mardis E.R."/>
            <person name="Marra M.A."/>
            <person name="Miner T.L."/>
            <person name="Minx P."/>
            <person name="Mullikin J.C."/>
            <person name="Plumb R.W."/>
            <person name="Rogers J."/>
            <person name="Schein J.E."/>
            <person name="Sohrmann M."/>
            <person name="Spieth J."/>
            <person name="Stajich J.E."/>
            <person name="Wei C."/>
            <person name="Willey D."/>
            <person name="Wilson R.K."/>
            <person name="Durbin R.M."/>
            <person name="Waterston R.H."/>
        </authorList>
    </citation>
    <scope>NUCLEOTIDE SEQUENCE [LARGE SCALE GENOMIC DNA]</scope>
    <source>
        <strain evidence="3">AF16</strain>
    </source>
</reference>
<accession>Q627G6</accession>
<accession>A8WNA9</accession>